<comment type="function">
    <text evidence="4">Modifies, by uridylylation and deuridylylation, the PII regulatory proteins GlnB and GlnK, in response to the nitrogen status of the cell that GlnD senses through the glutamine level. Under low glutamine levels, catalyzes the conversion of the PII proteins and UTP to PII-UMP and PPi, while under higher glutamine levels, GlnD likely hydrolyzes PII-UMP to PII and UMP (deuridylylation). Thus, controls uridylylation state and activity of the PII proteins, and plays an important role in the regulation of nitrogen metabolism.</text>
</comment>
<comment type="catalytic activity">
    <reaction evidence="1">
        <text>[protein-PII]-L-tyrosine + UTP = [protein-PII]-uridylyl-L-tyrosine + diphosphate</text>
        <dbReference type="Rhea" id="RHEA:13673"/>
        <dbReference type="Rhea" id="RHEA-COMP:12147"/>
        <dbReference type="Rhea" id="RHEA-COMP:12148"/>
        <dbReference type="ChEBI" id="CHEBI:33019"/>
        <dbReference type="ChEBI" id="CHEBI:46398"/>
        <dbReference type="ChEBI" id="CHEBI:46858"/>
        <dbReference type="ChEBI" id="CHEBI:90602"/>
        <dbReference type="EC" id="2.7.7.59"/>
    </reaction>
</comment>
<comment type="catalytic activity">
    <reaction evidence="1">
        <text>[protein-PII]-uridylyl-L-tyrosine + H2O = [protein-PII]-L-tyrosine + UMP + H(+)</text>
        <dbReference type="Rhea" id="RHEA:48600"/>
        <dbReference type="Rhea" id="RHEA-COMP:12147"/>
        <dbReference type="Rhea" id="RHEA-COMP:12148"/>
        <dbReference type="ChEBI" id="CHEBI:15377"/>
        <dbReference type="ChEBI" id="CHEBI:15378"/>
        <dbReference type="ChEBI" id="CHEBI:46858"/>
        <dbReference type="ChEBI" id="CHEBI:57865"/>
        <dbReference type="ChEBI" id="CHEBI:90602"/>
    </reaction>
</comment>
<comment type="cofactor">
    <cofactor evidence="1">
        <name>Mg(2+)</name>
        <dbReference type="ChEBI" id="CHEBI:18420"/>
    </cofactor>
</comment>
<comment type="activity regulation">
    <text evidence="4">Uridylyltransferase (UTase) activity is inhibited by glutamine, while glutamine likely activates uridylyl-removing (UR) activity.</text>
</comment>
<comment type="induction">
    <text evidence="4">Is constitutively expressed, irrespective of the nitrogen content of the medium.</text>
</comment>
<comment type="domain">
    <text evidence="1">Has four distinct domains: an N-terminal nucleotidyltransferase (NT) domain responsible for UTase activity, a central HD domain that encodes UR activity, and two C-terminal ACT domains that seem to have a role in glutamine sensing.</text>
</comment>
<comment type="disruption phenotype">
    <text evidence="4">Deletions in the 5'-region of this gene appear to be lethal. Insertion mutations in the central part of this gene abolishes the ability to use nitrate as a sole nitrogen source but not glutamine. In addition, neither uridylylation of PII nor induction of the ntr-regulated glnII gene (encoding glutamine synthetase II) under ammonium deficiency can be observed in mutant strains.</text>
</comment>
<comment type="similarity">
    <text evidence="1">Belongs to the GlnD family.</text>
</comment>
<comment type="sequence caution" evidence="5">
    <conflict type="erroneous initiation">
        <sequence resource="EMBL-CDS" id="AAF17352"/>
    </conflict>
</comment>
<gene>
    <name evidence="1" type="primary">glnD</name>
</gene>
<keyword id="KW-0378">Hydrolase</keyword>
<keyword id="KW-0460">Magnesium</keyword>
<keyword id="KW-0511">Multifunctional enzyme</keyword>
<keyword id="KW-0548">Nucleotidyltransferase</keyword>
<keyword id="KW-0677">Repeat</keyword>
<keyword id="KW-0808">Transferase</keyword>
<name>GLND_RHILV</name>
<evidence type="ECO:0000255" key="1">
    <source>
        <dbReference type="HAMAP-Rule" id="MF_00277"/>
    </source>
</evidence>
<evidence type="ECO:0000255" key="2">
    <source>
        <dbReference type="PROSITE-ProRule" id="PRU01175"/>
    </source>
</evidence>
<evidence type="ECO:0000256" key="3">
    <source>
        <dbReference type="SAM" id="MobiDB-lite"/>
    </source>
</evidence>
<evidence type="ECO:0000269" key="4">
    <source>
    </source>
</evidence>
<evidence type="ECO:0000305" key="5"/>
<dbReference type="EC" id="2.7.7.59" evidence="1"/>
<dbReference type="EC" id="3.1.4.-" evidence="1"/>
<dbReference type="EMBL" id="AF155830">
    <property type="protein sequence ID" value="AAF17352.1"/>
    <property type="status" value="ALT_INIT"/>
    <property type="molecule type" value="Genomic_DNA"/>
</dbReference>
<dbReference type="SMR" id="Q9RAE4"/>
<dbReference type="BRENDA" id="2.7.7.59">
    <property type="organism ID" value="5343"/>
</dbReference>
<dbReference type="GO" id="GO:0008773">
    <property type="term" value="F:[protein-PII] uridylyltransferase activity"/>
    <property type="evidence" value="ECO:0007669"/>
    <property type="project" value="UniProtKB-UniRule"/>
</dbReference>
<dbReference type="GO" id="GO:0008081">
    <property type="term" value="F:phosphoric diester hydrolase activity"/>
    <property type="evidence" value="ECO:0007669"/>
    <property type="project" value="UniProtKB-UniRule"/>
</dbReference>
<dbReference type="GO" id="GO:0006808">
    <property type="term" value="P:regulation of nitrogen utilization"/>
    <property type="evidence" value="ECO:0007669"/>
    <property type="project" value="UniProtKB-UniRule"/>
</dbReference>
<dbReference type="CDD" id="cd04899">
    <property type="entry name" value="ACT_ACR-UUR-like_2"/>
    <property type="match status" value="1"/>
</dbReference>
<dbReference type="CDD" id="cd04900">
    <property type="entry name" value="ACT_UUR-like_1"/>
    <property type="match status" value="1"/>
</dbReference>
<dbReference type="CDD" id="cd00077">
    <property type="entry name" value="HDc"/>
    <property type="match status" value="1"/>
</dbReference>
<dbReference type="CDD" id="cd05401">
    <property type="entry name" value="NT_GlnE_GlnD_like"/>
    <property type="match status" value="1"/>
</dbReference>
<dbReference type="Gene3D" id="3.30.70.260">
    <property type="match status" value="1"/>
</dbReference>
<dbReference type="Gene3D" id="3.30.460.10">
    <property type="entry name" value="Beta Polymerase, domain 2"/>
    <property type="match status" value="1"/>
</dbReference>
<dbReference type="Gene3D" id="1.10.3090.10">
    <property type="entry name" value="cca-adding enzyme, domain 2"/>
    <property type="match status" value="1"/>
</dbReference>
<dbReference type="HAMAP" id="MF_00277">
    <property type="entry name" value="PII_uridylyl_transf"/>
    <property type="match status" value="1"/>
</dbReference>
<dbReference type="InterPro" id="IPR045865">
    <property type="entry name" value="ACT-like_dom_sf"/>
</dbReference>
<dbReference type="InterPro" id="IPR002912">
    <property type="entry name" value="ACT_dom"/>
</dbReference>
<dbReference type="InterPro" id="IPR003607">
    <property type="entry name" value="HD/PDEase_dom"/>
</dbReference>
<dbReference type="InterPro" id="IPR006674">
    <property type="entry name" value="HD_domain"/>
</dbReference>
<dbReference type="InterPro" id="IPR043519">
    <property type="entry name" value="NT_sf"/>
</dbReference>
<dbReference type="InterPro" id="IPR013546">
    <property type="entry name" value="PII_UdlTrfase/GS_AdlTrfase"/>
</dbReference>
<dbReference type="InterPro" id="IPR002934">
    <property type="entry name" value="Polymerase_NTP_transf_dom"/>
</dbReference>
<dbReference type="InterPro" id="IPR010043">
    <property type="entry name" value="UTase/UR"/>
</dbReference>
<dbReference type="NCBIfam" id="NF003467">
    <property type="entry name" value="PRK05092.1"/>
    <property type="match status" value="1"/>
</dbReference>
<dbReference type="NCBIfam" id="TIGR01693">
    <property type="entry name" value="UTase_glnD"/>
    <property type="match status" value="1"/>
</dbReference>
<dbReference type="PANTHER" id="PTHR47320">
    <property type="entry name" value="BIFUNCTIONAL URIDYLYLTRANSFERASE/URIDYLYL-REMOVING ENZYME"/>
    <property type="match status" value="1"/>
</dbReference>
<dbReference type="PANTHER" id="PTHR47320:SF1">
    <property type="entry name" value="BIFUNCTIONAL URIDYLYLTRANSFERASE_URIDYLYL-REMOVING ENZYME"/>
    <property type="match status" value="1"/>
</dbReference>
<dbReference type="Pfam" id="PF01842">
    <property type="entry name" value="ACT"/>
    <property type="match status" value="2"/>
</dbReference>
<dbReference type="Pfam" id="PF08335">
    <property type="entry name" value="GlnD_UR_UTase"/>
    <property type="match status" value="1"/>
</dbReference>
<dbReference type="Pfam" id="PF01966">
    <property type="entry name" value="HD"/>
    <property type="match status" value="1"/>
</dbReference>
<dbReference type="Pfam" id="PF01909">
    <property type="entry name" value="NTP_transf_2"/>
    <property type="match status" value="1"/>
</dbReference>
<dbReference type="PIRSF" id="PIRSF006288">
    <property type="entry name" value="PII_uridyltransf"/>
    <property type="match status" value="1"/>
</dbReference>
<dbReference type="SMART" id="SM00471">
    <property type="entry name" value="HDc"/>
    <property type="match status" value="1"/>
</dbReference>
<dbReference type="SUPFAM" id="SSF55021">
    <property type="entry name" value="ACT-like"/>
    <property type="match status" value="2"/>
</dbReference>
<dbReference type="SUPFAM" id="SSF81301">
    <property type="entry name" value="Nucleotidyltransferase"/>
    <property type="match status" value="1"/>
</dbReference>
<dbReference type="SUPFAM" id="SSF81593">
    <property type="entry name" value="Nucleotidyltransferase substrate binding subunit/domain"/>
    <property type="match status" value="1"/>
</dbReference>
<dbReference type="SUPFAM" id="SSF81891">
    <property type="entry name" value="Poly A polymerase C-terminal region-like"/>
    <property type="match status" value="1"/>
</dbReference>
<dbReference type="PROSITE" id="PS51671">
    <property type="entry name" value="ACT"/>
    <property type="match status" value="2"/>
</dbReference>
<dbReference type="PROSITE" id="PS51831">
    <property type="entry name" value="HD"/>
    <property type="match status" value="1"/>
</dbReference>
<organism>
    <name type="scientific">Rhizobium leguminosarum bv. viciae</name>
    <dbReference type="NCBI Taxonomy" id="387"/>
    <lineage>
        <taxon>Bacteria</taxon>
        <taxon>Pseudomonadati</taxon>
        <taxon>Pseudomonadota</taxon>
        <taxon>Alphaproteobacteria</taxon>
        <taxon>Hyphomicrobiales</taxon>
        <taxon>Rhizobiaceae</taxon>
        <taxon>Rhizobium/Agrobacterium group</taxon>
        <taxon>Rhizobium</taxon>
    </lineage>
</organism>
<accession>Q9RAE4</accession>
<reference key="1">
    <citation type="journal article" date="2000" name="Microbiology">
        <title>The Rhizobium leguminosarum bv. viciae glnD gene, encoding a uridylyltransferase/uridylyl-removing enzyme, is expressed in the root nodule but is not essential for nitrogen fixation.</title>
        <authorList>
            <person name="Schluter A."/>
            <person name="Nohlen M."/>
            <person name="Kramer M."/>
            <person name="Defez R."/>
            <person name="Priefer U.B."/>
        </authorList>
    </citation>
    <scope>NUCLEOTIDE SEQUENCE [GENOMIC DNA]</scope>
    <scope>FUNCTION</scope>
    <scope>ACTIVITY REGULATION</scope>
    <scope>INDUCTION</scope>
    <scope>DISRUPTION PHENOTYPE</scope>
    <source>
        <strain>VF39</strain>
    </source>
</reference>
<sequence length="944" mass="106218">MRDLDFTNILDVELLQKQCDAVAEANRNRPDVLRADLLAVLKKASTEGRQKAREALMADGGGLNCAYRISWLQDQITTVLYNFATAHIFPQQKDKFAVTAVGGYGRDTLAPGSDIDLLFLFLPRPAEETHKAVEFMLYVLWDMGFKVGHATRTVEECIALSKSDMTIRTAILEMRYICGLQRLETELETRFDKEIVTGTGPEFIAAKLAERDERHRKAGDTRYLVEPNVKEGKGGLRDLHTLFWISKYYYHVRDQAELVKLGVLSKHEYRLLEKADDFLWAVRCHMHFLTGKAEERLSFDIQREIAEAFGYHTRPGLSAVERFMKHYFLVAKDVGDLTRILCAALEDQQAKSIPGLTGVISRFTHRNRKIAGSVEFVEDRGRIALADPEVFKRDPVNIIRLFHVADINGLEFHPDALKRVTRSLALIDNALRENDEANRLFMSILTSKRDPALILRRMNEAGVLGRFIPEFGKIVAMMQFNMYHHYTVDEHLIRTVDILSEIDKGRAEDLHPLANKLMPGIEDREALYVAVLLHDIAKGRQEDHSIAGARVARKLCVRFGLSQKQTEIVVWLIEEHLTMSMVAQTRDLTDRKTITDFADRVQSLDRLKMLLILTICDIRAVGPGVWNGWKGQLLRTLYYETELLLAGGFSEVSRKERANAAAEALHSALADWSQKDRNTYTKLHYQPYLLSVPLEDQIRHAHFIRQADKAGQALATMVRTDSFHAITEITVLSPDHPRLLAVIAGACAAAGANIVDAQIFTTSDGRALDTIHVSREFTDDADELRRAATIGRMIEDVLSGRKRLPEVIATRARNRKKSKAFVIPPSVNITNSLSNKFTVIEVECLDRPGLLSEITAVLSDLSLDIQSARITTFGEKVIDTFYVTDLVGQKISGDSKRANITARMKAVMAEEEDELRERMPSGIIAPAATARTPPASEKKAGSPI</sequence>
<protein>
    <recommendedName>
        <fullName evidence="1">Bifunctional uridylyltransferase/uridylyl-removing enzyme</fullName>
        <shortName evidence="1">UTase/UR</shortName>
    </recommendedName>
    <alternativeName>
        <fullName evidence="1">Bifunctional [protein-PII] modification enzyme</fullName>
    </alternativeName>
    <alternativeName>
        <fullName evidence="1">Bifunctional nitrogen sensor protein</fullName>
    </alternativeName>
    <domain>
        <recommendedName>
            <fullName evidence="1">[Protein-PII] uridylyltransferase</fullName>
            <shortName evidence="1">PII uridylyltransferase</shortName>
            <shortName evidence="1">UTase</shortName>
            <ecNumber evidence="1">2.7.7.59</ecNumber>
        </recommendedName>
    </domain>
    <domain>
        <recommendedName>
            <fullName evidence="1">[Protein-PII]-UMP uridylyl-removing enzyme</fullName>
            <shortName evidence="1">UR</shortName>
            <ecNumber evidence="1">3.1.4.-</ecNumber>
        </recommendedName>
    </domain>
</protein>
<feature type="chain" id="PRO_0000192758" description="Bifunctional uridylyltransferase/uridylyl-removing enzyme">
    <location>
        <begin position="1"/>
        <end position="944"/>
    </location>
</feature>
<feature type="domain" description="HD" evidence="2">
    <location>
        <begin position="488"/>
        <end position="604"/>
    </location>
</feature>
<feature type="domain" description="ACT 1" evidence="1">
    <location>
        <begin position="728"/>
        <end position="809"/>
    </location>
</feature>
<feature type="domain" description="ACT 2" evidence="1">
    <location>
        <begin position="839"/>
        <end position="918"/>
    </location>
</feature>
<feature type="region of interest" description="Uridylyltransferase">
    <location>
        <begin position="1"/>
        <end position="371"/>
    </location>
</feature>
<feature type="region of interest" description="Uridylyl-removing">
    <location>
        <begin position="372"/>
        <end position="727"/>
    </location>
</feature>
<feature type="region of interest" description="Disordered" evidence="3">
    <location>
        <begin position="911"/>
        <end position="944"/>
    </location>
</feature>
<feature type="compositionally biased region" description="Low complexity" evidence="3">
    <location>
        <begin position="925"/>
        <end position="935"/>
    </location>
</feature>
<proteinExistence type="evidence at transcript level"/>